<reference key="1">
    <citation type="journal article" date="2000" name="Genomics">
        <title>Cloning and expression of Nope, a new mouse gene of the immunoglobulin superfamily related to guidance receptors.</title>
        <authorList>
            <person name="Salbaum J.M."/>
            <person name="Kappen C."/>
        </authorList>
    </citation>
    <scope>NUCLEOTIDE SEQUENCE [MRNA] (ISOFORM 1)</scope>
    <scope>DEVELOPMENTAL STAGE</scope>
    <scope>TISSUE SPECIFICITY</scope>
    <source>
        <strain>FVB/NJ</strain>
    </source>
</reference>
<reference key="2">
    <citation type="submission" date="2000-12" db="EMBL/GenBank/DDBJ databases">
        <title>Up-regulation of a ras effector and down-regulation of a cell adhesion molecule are associated with transformation of osteoblasts.</title>
        <authorList>
            <person name="Murakami H."/>
            <person name="Nakamata T."/>
            <person name="Nakayama T."/>
            <person name="Yamamoto H."/>
            <person name="Hosaka T."/>
            <person name="Aoyama T."/>
            <person name="Nagayama S."/>
            <person name="Oka M."/>
            <person name="Kiyono T."/>
            <person name="Sasaki M.S."/>
            <person name="Nakamura T."/>
            <person name="Toguchida J."/>
        </authorList>
    </citation>
    <scope>NUCLEOTIDE SEQUENCE [MRNA] (ISOFORMS 1 AND 2)</scope>
    <source>
        <strain>C57BL/6J X DBA</strain>
    </source>
</reference>
<reference key="3">
    <citation type="journal article" date="2000" name="DNA Res.">
        <title>Prediction of the coding sequences of unidentified human genes. XVIII. The complete sequences of 100 new cDNA clones from brain which code for large proteins in vitro.</title>
        <authorList>
            <person name="Nagase T."/>
            <person name="Kikuno R."/>
            <person name="Nakayama M."/>
            <person name="Hirosawa M."/>
            <person name="Ohara O."/>
        </authorList>
    </citation>
    <scope>NUCLEOTIDE SEQUENCE [LARGE SCALE MRNA] OF 9-1252 (ISOFORM 3)</scope>
    <source>
        <tissue>Brain</tissue>
    </source>
</reference>
<keyword id="KW-0025">Alternative splicing</keyword>
<keyword id="KW-1003">Cell membrane</keyword>
<keyword id="KW-1015">Disulfide bond</keyword>
<keyword id="KW-0325">Glycoprotein</keyword>
<keyword id="KW-0393">Immunoglobulin domain</keyword>
<keyword id="KW-0472">Membrane</keyword>
<keyword id="KW-0597">Phosphoprotein</keyword>
<keyword id="KW-1185">Reference proteome</keyword>
<keyword id="KW-0677">Repeat</keyword>
<keyword id="KW-0732">Signal</keyword>
<keyword id="KW-0812">Transmembrane</keyword>
<keyword id="KW-1133">Transmembrane helix</keyword>
<name>IGDC4_MOUSE</name>
<gene>
    <name type="primary">Igdcc4</name>
    <name type="synonym">Ddm36</name>
    <name type="synonym">Kiaa1628</name>
    <name type="synonym">Nope</name>
</gene>
<feature type="signal peptide" evidence="2">
    <location>
        <begin position="1"/>
        <end position="22"/>
    </location>
</feature>
<feature type="chain" id="PRO_0000304623" description="Immunoglobulin superfamily DCC subclass member 4">
    <location>
        <begin position="23"/>
        <end position="1252"/>
    </location>
</feature>
<feature type="topological domain" description="Extracellular" evidence="2">
    <location>
        <begin position="23"/>
        <end position="956"/>
    </location>
</feature>
<feature type="transmembrane region" description="Helical" evidence="2">
    <location>
        <begin position="957"/>
        <end position="977"/>
    </location>
</feature>
<feature type="topological domain" description="Cytoplasmic" evidence="2">
    <location>
        <begin position="978"/>
        <end position="1252"/>
    </location>
</feature>
<feature type="domain" description="Ig-like 1">
    <location>
        <begin position="27"/>
        <end position="136"/>
    </location>
</feature>
<feature type="domain" description="Ig-like 2">
    <location>
        <begin position="142"/>
        <end position="228"/>
    </location>
</feature>
<feature type="domain" description="Ig-like 3">
    <location>
        <begin position="241"/>
        <end position="329"/>
    </location>
</feature>
<feature type="domain" description="Ig-like 4">
    <location>
        <begin position="334"/>
        <end position="420"/>
    </location>
</feature>
<feature type="domain" description="Fibronectin type-III 1" evidence="4">
    <location>
        <begin position="430"/>
        <end position="524"/>
    </location>
</feature>
<feature type="domain" description="Fibronectin type-III 2" evidence="4">
    <location>
        <begin position="526"/>
        <end position="622"/>
    </location>
</feature>
<feature type="domain" description="Fibronectin type-III 3" evidence="4">
    <location>
        <begin position="631"/>
        <end position="742"/>
    </location>
</feature>
<feature type="domain" description="Fibronectin type-III 4" evidence="4">
    <location>
        <begin position="751"/>
        <end position="844"/>
    </location>
</feature>
<feature type="domain" description="Fibronectin type-III 5" evidence="4">
    <location>
        <begin position="849"/>
        <end position="944"/>
    </location>
</feature>
<feature type="region of interest" description="Disordered" evidence="5">
    <location>
        <begin position="669"/>
        <end position="688"/>
    </location>
</feature>
<feature type="modified residue" description="Phosphothreonine" evidence="1">
    <location>
        <position position="994"/>
    </location>
</feature>
<feature type="glycosylation site" description="N-linked (GlcNAc...) asparagine" evidence="2">
    <location>
        <position position="88"/>
    </location>
</feature>
<feature type="glycosylation site" description="N-linked (GlcNAc...) asparagine" evidence="2">
    <location>
        <position position="251"/>
    </location>
</feature>
<feature type="disulfide bond" evidence="3">
    <location>
        <begin position="55"/>
        <end position="120"/>
    </location>
</feature>
<feature type="disulfide bond" evidence="3">
    <location>
        <begin position="163"/>
        <end position="211"/>
    </location>
</feature>
<feature type="disulfide bond" evidence="3">
    <location>
        <begin position="264"/>
        <end position="311"/>
    </location>
</feature>
<feature type="disulfide bond" evidence="3">
    <location>
        <begin position="355"/>
        <end position="404"/>
    </location>
</feature>
<feature type="splice variant" id="VSP_028047" description="In isoform 3." evidence="7">
    <original>DGKPISTDVIVLGRTNLLIASAQPRHSGVYVCRANKPRTRDFATAAAELRVLAAPAISQAPEALSRTRASTARFVCRASGEPRPALHWLHDGIPLRPN</original>
    <variation>GDQSKKELGIQTSGCDAALQGCSGNLVVGEGVEGTVPASPSSLLLLCHQMESLSPRMSSFWAGPIYSSPARSLGTLESMSAEPTSPARVISPLRLLSSECLLPQPSRRRPRRSRGRGPAPRASCAGRPGSHGPRCTGCTTGSRCDPM</variation>
    <location>
        <begin position="280"/>
        <end position="377"/>
    </location>
</feature>
<feature type="splice variant" id="VSP_028048" description="In isoform 2." evidence="8">
    <original>E</original>
    <variation>EE</variation>
    <location>
        <position position="570"/>
    </location>
</feature>
<feature type="sequence conflict" description="In Ref. 3; BAC65817." evidence="9" ref="3">
    <original>GLLVLTFCLLSA</original>
    <variation>EGSQENPSAWHG</variation>
    <location>
        <begin position="9"/>
        <end position="20"/>
    </location>
</feature>
<feature type="sequence conflict" description="In Ref. 1; AAF65930." evidence="9" ref="1">
    <original>S</original>
    <variation>P</variation>
    <location>
        <position position="186"/>
    </location>
</feature>
<feature type="sequence conflict" description="In Ref. 1; AAF65930." evidence="9" ref="1">
    <original>NGV</original>
    <variation>KWL</variation>
    <location>
        <begin position="193"/>
        <end position="195"/>
    </location>
</feature>
<feature type="sequence conflict" description="In Ref. 1; AAF65930." evidence="9" ref="1">
    <original>S</original>
    <variation>N</variation>
    <location>
        <position position="259"/>
    </location>
</feature>
<feature type="sequence conflict" description="In Ref. 1; AAF65930." evidence="9" ref="1">
    <original>R</original>
    <variation>L</variation>
    <location>
        <position position="317"/>
    </location>
</feature>
<feature type="sequence conflict" description="In Ref. 1; AAF65930." evidence="9" ref="1">
    <original>R</original>
    <variation>G</variation>
    <location>
        <position position="665"/>
    </location>
</feature>
<feature type="sequence conflict" description="In Ref. 1; AAF65930." evidence="9" ref="1">
    <original>L</original>
    <variation>P</variation>
    <location>
        <position position="711"/>
    </location>
</feature>
<feature type="sequence conflict" description="In Ref. 1; AAF65930." evidence="9" ref="1">
    <original>K</original>
    <variation>E</variation>
    <location>
        <position position="944"/>
    </location>
</feature>
<feature type="sequence conflict" description="In Ref. 1; AAF65930." evidence="9" ref="1">
    <original>R</original>
    <variation>Q</variation>
    <location>
        <position position="979"/>
    </location>
</feature>
<feature type="sequence conflict" description="In Ref. 1; AAF65930." evidence="9" ref="1">
    <original>A</original>
    <variation>G</variation>
    <location>
        <position position="1112"/>
    </location>
</feature>
<sequence length="1252" mass="134765">MARADTGRGLLVLTFCLLSARGELPLPQETTVKLSCDEGPLQVILGPEQAVVLDCTLGATAAGPPTRVTWSKDGDTVLEHENLHLLPNGSLWLSSPLEQEDSDDEEALRIWKVTEGSYSCLAHSPLGVVASQVAVVKLATLEDFSLHPESQIVEENGTARFECHTKGLPAPIITWEKDQVTVPEESRLITLPNGVLQILDVQDSDAGSYRCVATNSARQRFSQEASLTVALRGSLEATRGQDVVIVAAPENTTVVSGQSVVMECVASADPTPFVSWVRQDGKPISTDVIVLGRTNLLIASAQPRHSGVYVCRANKPRTRDFATAAAELRVLAAPAISQAPEALSRTRASTARFVCRASGEPRPALHWLHDGIPLRPNGRVKVQGGGGSLVITQIGLQDAGYYQCVAENSAGTACAAAPLAVVVREGLPSAPTRVTATPLSSSSVLVAWERPELHSEQIIGFSLHYQKARGVDNVEYQFAVNNDTTELQVRDLEPNTDYEFYVVAYSQLGASRTSSPALVHTLDDVPSAAPQLTLSSPNPSDIRVAWLPLPSSLSNGQVLKYKIEYGLGKEDQVFSTEVPGNETQLTLNSLQPNKVYRVRISAGTGAGYGVPSQWMQHRTPGVHNQSHVPFAPAELKVRAKMESLVVSWQPPPHPTQISGYKLYWREVGTEEEADGDRPPGGRGDQAWDVGPVRLKKKVKQYELTQLVPGRLYEVKLVAFNKHEDGYAAVWKGKTEKAPTPDLPIQRGPPLPPAHVHAESNSSTSIWLRWKKPDFTTVKIVNYTVRFGPWGLRNASLVTYYTSSGEDILIGGLKPFTKYEFAVQSHGVDMDGPFGSVVERSTLPDRPSTPPSDLRLSPLTPSTVRLHWCPPTEPNGEIVEYLILYSNNHTQPEHQWTLLTTEGNIFSAEVHGLESDTRYFFKMGARTEVGPGPFSRLQDVITLQKTFSDSLDVHAVTGIIVGVCLGLLCLLACMCAGLRRSSHREALPGLSSSGTPGNPALYTRARLGPPSVPAAHELESLVHPRPQDWSPPPSDVEDKAEVHSLMGGSVSDCRGHSKRKISWAQAGGPNWAGSWAGCELPQGSGPRPALTRALLPPAGTGQTLLLQALVYDAIKSNGRKKPSPACRNQVEAEVIVHSDFGASKGCPDLHLQDLEPEEPLTAETLPSTSGAVDLSQGADWLGRELGGCQPTTSGPERLTCLPEAASASCSCSDLQPSTAIEEAPGKSCQPKALCPLTVSPSLPRAPVSSAQVP</sequence>
<protein>
    <recommendedName>
        <fullName>Immunoglobulin superfamily DCC subclass member 4</fullName>
    </recommendedName>
    <alternativeName>
        <fullName>Neighbor of punc e11</fullName>
    </alternativeName>
    <alternativeName>
        <fullName>Protein DDM36</fullName>
    </alternativeName>
</protein>
<accession>Q9EQS9</accession>
<accession>Q80TB0</accession>
<accession>Q9EQS8</accession>
<accession>Q9JLI1</accession>
<evidence type="ECO:0000250" key="1">
    <source>
        <dbReference type="UniProtKB" id="Q8TDY8"/>
    </source>
</evidence>
<evidence type="ECO:0000255" key="2"/>
<evidence type="ECO:0000255" key="3">
    <source>
        <dbReference type="PROSITE-ProRule" id="PRU00114"/>
    </source>
</evidence>
<evidence type="ECO:0000255" key="4">
    <source>
        <dbReference type="PROSITE-ProRule" id="PRU00316"/>
    </source>
</evidence>
<evidence type="ECO:0000256" key="5">
    <source>
        <dbReference type="SAM" id="MobiDB-lite"/>
    </source>
</evidence>
<evidence type="ECO:0000269" key="6">
    <source>
    </source>
</evidence>
<evidence type="ECO:0000303" key="7">
    <source>
    </source>
</evidence>
<evidence type="ECO:0000303" key="8">
    <source ref="2"/>
</evidence>
<evidence type="ECO:0000305" key="9"/>
<comment type="subcellular location">
    <subcellularLocation>
        <location evidence="9">Cell membrane</location>
        <topology evidence="9">Single-pass type I membrane protein</topology>
    </subcellularLocation>
</comment>
<comment type="alternative products">
    <event type="alternative splicing"/>
    <isoform>
        <id>Q9EQS9-1</id>
        <name>1</name>
        <name>Ddm36</name>
        <sequence type="displayed"/>
    </isoform>
    <isoform>
        <id>Q9EQS9-2</id>
        <name>2</name>
        <name>Ddm36e</name>
        <sequence type="described" ref="VSP_028048"/>
    </isoform>
    <isoform>
        <id>Q9EQS9-3</id>
        <name>3</name>
        <sequence type="described" ref="VSP_028047"/>
    </isoform>
</comment>
<comment type="tissue specificity">
    <text evidence="6">Expressed in skeletal muscle, heart and brain. Brain expression is hippocampus-specific.</text>
</comment>
<comment type="developmental stage">
    <text evidence="6">Expressed from 9.5 dpc. Expression is observed in the developing embryo, especially in the notochord, in developing skeletal muscles, and later in the ventricular zone of the nervous system.</text>
</comment>
<comment type="similarity">
    <text evidence="9">Belongs to the immunoglobulin superfamily. DCC family.</text>
</comment>
<proteinExistence type="evidence at transcript level"/>
<dbReference type="EMBL" id="AF176694">
    <property type="protein sequence ID" value="AAF65930.1"/>
    <property type="molecule type" value="mRNA"/>
</dbReference>
<dbReference type="EMBL" id="AB052620">
    <property type="protein sequence ID" value="BAB19278.1"/>
    <property type="molecule type" value="mRNA"/>
</dbReference>
<dbReference type="EMBL" id="AB052621">
    <property type="protein sequence ID" value="BAB19279.1"/>
    <property type="molecule type" value="mRNA"/>
</dbReference>
<dbReference type="EMBL" id="AK122535">
    <property type="protein sequence ID" value="BAC65817.1"/>
    <property type="molecule type" value="mRNA"/>
</dbReference>
<dbReference type="CCDS" id="CCDS72258.1">
    <molecule id="Q9EQS9-2"/>
</dbReference>
<dbReference type="CCDS" id="CCDS90598.1">
    <molecule id="Q9EQS9-1"/>
</dbReference>
<dbReference type="RefSeq" id="NP_001277244.1">
    <molecule id="Q9EQS9-2"/>
    <property type="nucleotide sequence ID" value="NM_001290315.2"/>
</dbReference>
<dbReference type="RefSeq" id="NP_064427.2">
    <molecule id="Q9EQS9-1"/>
    <property type="nucleotide sequence ID" value="NM_020043.4"/>
</dbReference>
<dbReference type="SMR" id="Q9EQS9"/>
<dbReference type="FunCoup" id="Q9EQS9">
    <property type="interactions" value="725"/>
</dbReference>
<dbReference type="STRING" id="10090.ENSMUSP00000045387"/>
<dbReference type="GlyCosmos" id="Q9EQS9">
    <property type="glycosylation" value="2 sites, No reported glycans"/>
</dbReference>
<dbReference type="GlyGen" id="Q9EQS9">
    <property type="glycosylation" value="9 sites, 4 N-linked glycans (6 sites)"/>
</dbReference>
<dbReference type="iPTMnet" id="Q9EQS9"/>
<dbReference type="PhosphoSitePlus" id="Q9EQS9"/>
<dbReference type="PaxDb" id="10090-ENSMUSP00000076878"/>
<dbReference type="ProteomicsDB" id="267291">
    <molecule id="Q9EQS9-1"/>
</dbReference>
<dbReference type="ProteomicsDB" id="267292">
    <molecule id="Q9EQS9-2"/>
</dbReference>
<dbReference type="ProteomicsDB" id="267293">
    <molecule id="Q9EQS9-3"/>
</dbReference>
<dbReference type="Antibodypedia" id="2317">
    <property type="antibodies" value="69 antibodies from 13 providers"/>
</dbReference>
<dbReference type="DNASU" id="56741"/>
<dbReference type="Ensembl" id="ENSMUST00000035499.5">
    <molecule id="Q9EQS9-2"/>
    <property type="protein sequence ID" value="ENSMUSP00000045387.4"/>
    <property type="gene ID" value="ENSMUSG00000032816.17"/>
</dbReference>
<dbReference type="Ensembl" id="ENSMUST00000213533.2">
    <molecule id="Q9EQS9-1"/>
    <property type="protein sequence ID" value="ENSMUSP00000150272.2"/>
    <property type="gene ID" value="ENSMUSG00000032816.17"/>
</dbReference>
<dbReference type="GeneID" id="56741"/>
<dbReference type="KEGG" id="mmu:56741"/>
<dbReference type="UCSC" id="uc009qct.2">
    <molecule id="Q9EQS9-1"/>
    <property type="organism name" value="mouse"/>
</dbReference>
<dbReference type="UCSC" id="uc009qcu.2">
    <molecule id="Q9EQS9-2"/>
    <property type="organism name" value="mouse"/>
</dbReference>
<dbReference type="AGR" id="MGI:1858497"/>
<dbReference type="CTD" id="57722"/>
<dbReference type="MGI" id="MGI:1858497">
    <property type="gene designation" value="Igdcc4"/>
</dbReference>
<dbReference type="VEuPathDB" id="HostDB:ENSMUSG00000032816"/>
<dbReference type="eggNOG" id="KOG4221">
    <property type="taxonomic scope" value="Eukaryota"/>
</dbReference>
<dbReference type="GeneTree" id="ENSGT00940000159637"/>
<dbReference type="HOGENOM" id="CLU_006906_0_0_1"/>
<dbReference type="InParanoid" id="Q9EQS9"/>
<dbReference type="OMA" id="LHWCPPS"/>
<dbReference type="PhylomeDB" id="Q9EQS9"/>
<dbReference type="BioGRID-ORCS" id="56741">
    <property type="hits" value="3 hits in 71 CRISPR screens"/>
</dbReference>
<dbReference type="ChiTaRS" id="Igdcc4">
    <property type="organism name" value="mouse"/>
</dbReference>
<dbReference type="PRO" id="PR:Q9EQS9"/>
<dbReference type="Proteomes" id="UP000000589">
    <property type="component" value="Chromosome 9"/>
</dbReference>
<dbReference type="RNAct" id="Q9EQS9">
    <property type="molecule type" value="protein"/>
</dbReference>
<dbReference type="Bgee" id="ENSMUSG00000032816">
    <property type="expression patterns" value="Expressed in indifferent gonad and 251 other cell types or tissues"/>
</dbReference>
<dbReference type="ExpressionAtlas" id="Q9EQS9">
    <property type="expression patterns" value="baseline and differential"/>
</dbReference>
<dbReference type="GO" id="GO:0005886">
    <property type="term" value="C:plasma membrane"/>
    <property type="evidence" value="ECO:0000247"/>
    <property type="project" value="MGI"/>
</dbReference>
<dbReference type="CDD" id="cd00063">
    <property type="entry name" value="FN3"/>
    <property type="match status" value="5"/>
</dbReference>
<dbReference type="FunFam" id="2.60.40.10:FF:000273">
    <property type="entry name" value="contactin-3 isoform X1"/>
    <property type="match status" value="1"/>
</dbReference>
<dbReference type="FunFam" id="2.60.40.10:FF:000759">
    <property type="entry name" value="Immunoglobulin superfamily DCC subclass member 4"/>
    <property type="match status" value="1"/>
</dbReference>
<dbReference type="FunFam" id="2.60.40.10:FF:001038">
    <property type="entry name" value="Immunoglobulin superfamily DCC subclass member 4"/>
    <property type="match status" value="1"/>
</dbReference>
<dbReference type="FunFam" id="2.60.40.10:FF:001275">
    <property type="entry name" value="Immunoglobulin superfamily DCC subclass member 4"/>
    <property type="match status" value="1"/>
</dbReference>
<dbReference type="FunFam" id="2.60.40.10:FF:001755">
    <property type="entry name" value="Immunoglobulin superfamily DCC subclass member 4"/>
    <property type="match status" value="1"/>
</dbReference>
<dbReference type="FunFam" id="2.60.40.10:FF:000455">
    <property type="entry name" value="Protogenin A"/>
    <property type="match status" value="1"/>
</dbReference>
<dbReference type="FunFam" id="2.60.40.10:FF:000551">
    <property type="entry name" value="Protogenin A"/>
    <property type="match status" value="1"/>
</dbReference>
<dbReference type="FunFam" id="2.60.40.10:FF:000299">
    <property type="entry name" value="protogenin isoform X2"/>
    <property type="match status" value="1"/>
</dbReference>
<dbReference type="FunFam" id="2.60.40.10:FF:000456">
    <property type="entry name" value="protogenin isoform X2"/>
    <property type="match status" value="1"/>
</dbReference>
<dbReference type="Gene3D" id="2.60.40.10">
    <property type="entry name" value="Immunoglobulins"/>
    <property type="match status" value="9"/>
</dbReference>
<dbReference type="InterPro" id="IPR003961">
    <property type="entry name" value="FN3_dom"/>
</dbReference>
<dbReference type="InterPro" id="IPR036116">
    <property type="entry name" value="FN3_sf"/>
</dbReference>
<dbReference type="InterPro" id="IPR007110">
    <property type="entry name" value="Ig-like_dom"/>
</dbReference>
<dbReference type="InterPro" id="IPR036179">
    <property type="entry name" value="Ig-like_dom_sf"/>
</dbReference>
<dbReference type="InterPro" id="IPR013783">
    <property type="entry name" value="Ig-like_fold"/>
</dbReference>
<dbReference type="InterPro" id="IPR013098">
    <property type="entry name" value="Ig_I-set"/>
</dbReference>
<dbReference type="InterPro" id="IPR003599">
    <property type="entry name" value="Ig_sub"/>
</dbReference>
<dbReference type="InterPro" id="IPR003598">
    <property type="entry name" value="Ig_sub2"/>
</dbReference>
<dbReference type="PANTHER" id="PTHR44170:SF5">
    <property type="entry name" value="IMMUNOGLOBULIN SUPERFAMILY DCC SUBCLASS MEMBER 4"/>
    <property type="match status" value="1"/>
</dbReference>
<dbReference type="PANTHER" id="PTHR44170">
    <property type="entry name" value="PROTEIN SIDEKICK"/>
    <property type="match status" value="1"/>
</dbReference>
<dbReference type="Pfam" id="PF00041">
    <property type="entry name" value="fn3"/>
    <property type="match status" value="5"/>
</dbReference>
<dbReference type="Pfam" id="PF07679">
    <property type="entry name" value="I-set"/>
    <property type="match status" value="2"/>
</dbReference>
<dbReference type="Pfam" id="PF13927">
    <property type="entry name" value="Ig_3"/>
    <property type="match status" value="1"/>
</dbReference>
<dbReference type="SMART" id="SM00060">
    <property type="entry name" value="FN3"/>
    <property type="match status" value="5"/>
</dbReference>
<dbReference type="SMART" id="SM00409">
    <property type="entry name" value="IG"/>
    <property type="match status" value="4"/>
</dbReference>
<dbReference type="SMART" id="SM00408">
    <property type="entry name" value="IGc2"/>
    <property type="match status" value="4"/>
</dbReference>
<dbReference type="SUPFAM" id="SSF49265">
    <property type="entry name" value="Fibronectin type III"/>
    <property type="match status" value="3"/>
</dbReference>
<dbReference type="SUPFAM" id="SSF48726">
    <property type="entry name" value="Immunoglobulin"/>
    <property type="match status" value="4"/>
</dbReference>
<dbReference type="PROSITE" id="PS50853">
    <property type="entry name" value="FN3"/>
    <property type="match status" value="5"/>
</dbReference>
<dbReference type="PROSITE" id="PS50835">
    <property type="entry name" value="IG_LIKE"/>
    <property type="match status" value="4"/>
</dbReference>
<organism>
    <name type="scientific">Mus musculus</name>
    <name type="common">Mouse</name>
    <dbReference type="NCBI Taxonomy" id="10090"/>
    <lineage>
        <taxon>Eukaryota</taxon>
        <taxon>Metazoa</taxon>
        <taxon>Chordata</taxon>
        <taxon>Craniata</taxon>
        <taxon>Vertebrata</taxon>
        <taxon>Euteleostomi</taxon>
        <taxon>Mammalia</taxon>
        <taxon>Eutheria</taxon>
        <taxon>Euarchontoglires</taxon>
        <taxon>Glires</taxon>
        <taxon>Rodentia</taxon>
        <taxon>Myomorpha</taxon>
        <taxon>Muroidea</taxon>
        <taxon>Muridae</taxon>
        <taxon>Murinae</taxon>
        <taxon>Mus</taxon>
        <taxon>Mus</taxon>
    </lineage>
</organism>